<name>RUVC_PSEPW</name>
<proteinExistence type="inferred from homology"/>
<dbReference type="EC" id="3.1.21.10" evidence="1"/>
<dbReference type="EMBL" id="CP000949">
    <property type="protein sequence ID" value="ACA74480.1"/>
    <property type="molecule type" value="Genomic_DNA"/>
</dbReference>
<dbReference type="SMR" id="B1JD72"/>
<dbReference type="STRING" id="390235.PputW619_4000"/>
<dbReference type="KEGG" id="ppw:PputW619_4000"/>
<dbReference type="eggNOG" id="COG0817">
    <property type="taxonomic scope" value="Bacteria"/>
</dbReference>
<dbReference type="HOGENOM" id="CLU_091257_2_1_6"/>
<dbReference type="OrthoDB" id="9805499at2"/>
<dbReference type="GO" id="GO:0005737">
    <property type="term" value="C:cytoplasm"/>
    <property type="evidence" value="ECO:0007669"/>
    <property type="project" value="UniProtKB-SubCell"/>
</dbReference>
<dbReference type="GO" id="GO:0048476">
    <property type="term" value="C:Holliday junction resolvase complex"/>
    <property type="evidence" value="ECO:0007669"/>
    <property type="project" value="UniProtKB-UniRule"/>
</dbReference>
<dbReference type="GO" id="GO:0008821">
    <property type="term" value="F:crossover junction DNA endonuclease activity"/>
    <property type="evidence" value="ECO:0007669"/>
    <property type="project" value="UniProtKB-UniRule"/>
</dbReference>
<dbReference type="GO" id="GO:0003677">
    <property type="term" value="F:DNA binding"/>
    <property type="evidence" value="ECO:0007669"/>
    <property type="project" value="UniProtKB-KW"/>
</dbReference>
<dbReference type="GO" id="GO:0000287">
    <property type="term" value="F:magnesium ion binding"/>
    <property type="evidence" value="ECO:0007669"/>
    <property type="project" value="UniProtKB-UniRule"/>
</dbReference>
<dbReference type="GO" id="GO:0006310">
    <property type="term" value="P:DNA recombination"/>
    <property type="evidence" value="ECO:0007669"/>
    <property type="project" value="UniProtKB-UniRule"/>
</dbReference>
<dbReference type="GO" id="GO:0006281">
    <property type="term" value="P:DNA repair"/>
    <property type="evidence" value="ECO:0007669"/>
    <property type="project" value="UniProtKB-UniRule"/>
</dbReference>
<dbReference type="CDD" id="cd16962">
    <property type="entry name" value="RuvC"/>
    <property type="match status" value="1"/>
</dbReference>
<dbReference type="FunFam" id="3.30.420.10:FF:000002">
    <property type="entry name" value="Crossover junction endodeoxyribonuclease RuvC"/>
    <property type="match status" value="1"/>
</dbReference>
<dbReference type="Gene3D" id="3.30.420.10">
    <property type="entry name" value="Ribonuclease H-like superfamily/Ribonuclease H"/>
    <property type="match status" value="1"/>
</dbReference>
<dbReference type="HAMAP" id="MF_00034">
    <property type="entry name" value="RuvC"/>
    <property type="match status" value="1"/>
</dbReference>
<dbReference type="InterPro" id="IPR012337">
    <property type="entry name" value="RNaseH-like_sf"/>
</dbReference>
<dbReference type="InterPro" id="IPR036397">
    <property type="entry name" value="RNaseH_sf"/>
</dbReference>
<dbReference type="InterPro" id="IPR020563">
    <property type="entry name" value="X-over_junc_endoDNase_Mg_BS"/>
</dbReference>
<dbReference type="InterPro" id="IPR002176">
    <property type="entry name" value="X-over_junc_endoDNase_RuvC"/>
</dbReference>
<dbReference type="NCBIfam" id="TIGR00228">
    <property type="entry name" value="ruvC"/>
    <property type="match status" value="1"/>
</dbReference>
<dbReference type="PANTHER" id="PTHR30194">
    <property type="entry name" value="CROSSOVER JUNCTION ENDODEOXYRIBONUCLEASE RUVC"/>
    <property type="match status" value="1"/>
</dbReference>
<dbReference type="PANTHER" id="PTHR30194:SF3">
    <property type="entry name" value="CROSSOVER JUNCTION ENDODEOXYRIBONUCLEASE RUVC"/>
    <property type="match status" value="1"/>
</dbReference>
<dbReference type="Pfam" id="PF02075">
    <property type="entry name" value="RuvC"/>
    <property type="match status" value="1"/>
</dbReference>
<dbReference type="PRINTS" id="PR00696">
    <property type="entry name" value="RSOLVASERUVC"/>
</dbReference>
<dbReference type="SUPFAM" id="SSF53098">
    <property type="entry name" value="Ribonuclease H-like"/>
    <property type="match status" value="1"/>
</dbReference>
<dbReference type="PROSITE" id="PS01321">
    <property type="entry name" value="RUVC"/>
    <property type="match status" value="1"/>
</dbReference>
<feature type="chain" id="PRO_1000090550" description="Crossover junction endodeoxyribonuclease RuvC">
    <location>
        <begin position="1"/>
        <end position="174"/>
    </location>
</feature>
<feature type="active site" evidence="1">
    <location>
        <position position="8"/>
    </location>
</feature>
<feature type="active site" evidence="1">
    <location>
        <position position="67"/>
    </location>
</feature>
<feature type="active site" evidence="1">
    <location>
        <position position="139"/>
    </location>
</feature>
<feature type="binding site" evidence="1">
    <location>
        <position position="8"/>
    </location>
    <ligand>
        <name>Mg(2+)</name>
        <dbReference type="ChEBI" id="CHEBI:18420"/>
        <label>1</label>
    </ligand>
</feature>
<feature type="binding site" evidence="1">
    <location>
        <position position="67"/>
    </location>
    <ligand>
        <name>Mg(2+)</name>
        <dbReference type="ChEBI" id="CHEBI:18420"/>
        <label>2</label>
    </ligand>
</feature>
<feature type="binding site" evidence="1">
    <location>
        <position position="139"/>
    </location>
    <ligand>
        <name>Mg(2+)</name>
        <dbReference type="ChEBI" id="CHEBI:18420"/>
        <label>1</label>
    </ligand>
</feature>
<sequence>MTLILGIDPGSRITGYGVVRQTARGCEYVASGCIRTGSGELHERLQIVFRGVSEIIAQHGPVTMGIERVFMARNPDSALKLGQARGAAIVAAAEAGLEIAEYSATQVKQAVAGTGGANKEQVMLMVMHLLKLTQKPQIDASDALAIALCHAHTRSSLVPHGLATARRRGGRLRL</sequence>
<keyword id="KW-0963">Cytoplasm</keyword>
<keyword id="KW-0227">DNA damage</keyword>
<keyword id="KW-0233">DNA recombination</keyword>
<keyword id="KW-0234">DNA repair</keyword>
<keyword id="KW-0238">DNA-binding</keyword>
<keyword id="KW-0255">Endonuclease</keyword>
<keyword id="KW-0378">Hydrolase</keyword>
<keyword id="KW-0460">Magnesium</keyword>
<keyword id="KW-0479">Metal-binding</keyword>
<keyword id="KW-0540">Nuclease</keyword>
<reference key="1">
    <citation type="submission" date="2008-02" db="EMBL/GenBank/DDBJ databases">
        <title>Complete sequence of Pseudomonas putida W619.</title>
        <authorList>
            <person name="Copeland A."/>
            <person name="Lucas S."/>
            <person name="Lapidus A."/>
            <person name="Barry K."/>
            <person name="Detter J.C."/>
            <person name="Glavina del Rio T."/>
            <person name="Dalin E."/>
            <person name="Tice H."/>
            <person name="Pitluck S."/>
            <person name="Chain P."/>
            <person name="Malfatti S."/>
            <person name="Shin M."/>
            <person name="Vergez L."/>
            <person name="Schmutz J."/>
            <person name="Larimer F."/>
            <person name="Land M."/>
            <person name="Hauser L."/>
            <person name="Kyrpides N."/>
            <person name="Kim E."/>
            <person name="Taghavi S."/>
            <person name="Vangronsveld D."/>
            <person name="van der Lelie D."/>
            <person name="Richardson P."/>
        </authorList>
    </citation>
    <scope>NUCLEOTIDE SEQUENCE [LARGE SCALE GENOMIC DNA]</scope>
    <source>
        <strain>W619</strain>
    </source>
</reference>
<accession>B1JD72</accession>
<comment type="function">
    <text evidence="1">The RuvA-RuvB-RuvC complex processes Holliday junction (HJ) DNA during genetic recombination and DNA repair. Endonuclease that resolves HJ intermediates. Cleaves cruciform DNA by making single-stranded nicks across the HJ at symmetrical positions within the homologous arms, yielding a 5'-phosphate and a 3'-hydroxyl group; requires a central core of homology in the junction. The consensus cleavage sequence is 5'-(A/T)TT(C/G)-3'. Cleavage occurs on the 3'-side of the TT dinucleotide at the point of strand exchange. HJ branch migration catalyzed by RuvA-RuvB allows RuvC to scan DNA until it finds its consensus sequence, where it cleaves and resolves the cruciform DNA.</text>
</comment>
<comment type="catalytic activity">
    <reaction evidence="1">
        <text>Endonucleolytic cleavage at a junction such as a reciprocal single-stranded crossover between two homologous DNA duplexes (Holliday junction).</text>
        <dbReference type="EC" id="3.1.21.10"/>
    </reaction>
</comment>
<comment type="cofactor">
    <cofactor evidence="1">
        <name>Mg(2+)</name>
        <dbReference type="ChEBI" id="CHEBI:18420"/>
    </cofactor>
    <text evidence="1">Binds 2 Mg(2+) ion per subunit.</text>
</comment>
<comment type="subunit">
    <text evidence="1">Homodimer which binds Holliday junction (HJ) DNA. The HJ becomes 2-fold symmetrical on binding to RuvC with unstacked arms; it has a different conformation from HJ DNA in complex with RuvA. In the full resolvosome a probable DNA-RuvA(4)-RuvB(12)-RuvC(2) complex forms which resolves the HJ.</text>
</comment>
<comment type="subcellular location">
    <subcellularLocation>
        <location evidence="1">Cytoplasm</location>
    </subcellularLocation>
</comment>
<comment type="similarity">
    <text evidence="1">Belongs to the RuvC family.</text>
</comment>
<protein>
    <recommendedName>
        <fullName evidence="1">Crossover junction endodeoxyribonuclease RuvC</fullName>
        <ecNumber evidence="1">3.1.21.10</ecNumber>
    </recommendedName>
    <alternativeName>
        <fullName evidence="1">Holliday junction nuclease RuvC</fullName>
    </alternativeName>
    <alternativeName>
        <fullName evidence="1">Holliday junction resolvase RuvC</fullName>
    </alternativeName>
</protein>
<gene>
    <name evidence="1" type="primary">ruvC</name>
    <name type="ordered locus">PputW619_4000</name>
</gene>
<organism>
    <name type="scientific">Pseudomonas putida (strain W619)</name>
    <dbReference type="NCBI Taxonomy" id="390235"/>
    <lineage>
        <taxon>Bacteria</taxon>
        <taxon>Pseudomonadati</taxon>
        <taxon>Pseudomonadota</taxon>
        <taxon>Gammaproteobacteria</taxon>
        <taxon>Pseudomonadales</taxon>
        <taxon>Pseudomonadaceae</taxon>
        <taxon>Pseudomonas</taxon>
    </lineage>
</organism>
<evidence type="ECO:0000255" key="1">
    <source>
        <dbReference type="HAMAP-Rule" id="MF_00034"/>
    </source>
</evidence>